<dbReference type="EC" id="3.4.24.-"/>
<dbReference type="EMBL" id="D28870">
    <property type="protein sequence ID" value="BAA06025.1"/>
    <property type="molecule type" value="mRNA"/>
</dbReference>
<dbReference type="SMR" id="Q90220"/>
<dbReference type="MEROPS" id="M12.134"/>
<dbReference type="GO" id="GO:0005576">
    <property type="term" value="C:extracellular region"/>
    <property type="evidence" value="ECO:0007669"/>
    <property type="project" value="UniProtKB-SubCell"/>
</dbReference>
<dbReference type="GO" id="GO:0005886">
    <property type="term" value="C:plasma membrane"/>
    <property type="evidence" value="ECO:0007669"/>
    <property type="project" value="TreeGrafter"/>
</dbReference>
<dbReference type="GO" id="GO:0046872">
    <property type="term" value="F:metal ion binding"/>
    <property type="evidence" value="ECO:0007669"/>
    <property type="project" value="UniProtKB-KW"/>
</dbReference>
<dbReference type="GO" id="GO:0004222">
    <property type="term" value="F:metalloendopeptidase activity"/>
    <property type="evidence" value="ECO:0007669"/>
    <property type="project" value="InterPro"/>
</dbReference>
<dbReference type="GO" id="GO:0090729">
    <property type="term" value="F:toxin activity"/>
    <property type="evidence" value="ECO:0007669"/>
    <property type="project" value="UniProtKB-KW"/>
</dbReference>
<dbReference type="GO" id="GO:0006508">
    <property type="term" value="P:proteolysis"/>
    <property type="evidence" value="ECO:0007669"/>
    <property type="project" value="UniProtKB-KW"/>
</dbReference>
<dbReference type="CDD" id="cd04269">
    <property type="entry name" value="ZnMc_adamalysin_II_like"/>
    <property type="match status" value="1"/>
</dbReference>
<dbReference type="FunFam" id="3.40.390.10:FF:000002">
    <property type="entry name" value="Disintegrin and metalloproteinase domain-containing protein 22"/>
    <property type="match status" value="1"/>
</dbReference>
<dbReference type="FunFam" id="4.10.70.10:FF:000005">
    <property type="entry name" value="Zinc metalloproteinase/disintegrin"/>
    <property type="match status" value="1"/>
</dbReference>
<dbReference type="Gene3D" id="3.40.390.10">
    <property type="entry name" value="Collagenase (Catalytic Domain)"/>
    <property type="match status" value="1"/>
</dbReference>
<dbReference type="Gene3D" id="4.10.70.10">
    <property type="entry name" value="Disintegrin domain"/>
    <property type="match status" value="1"/>
</dbReference>
<dbReference type="InterPro" id="IPR018358">
    <property type="entry name" value="Disintegrin_CS"/>
</dbReference>
<dbReference type="InterPro" id="IPR001762">
    <property type="entry name" value="Disintegrin_dom"/>
</dbReference>
<dbReference type="InterPro" id="IPR036436">
    <property type="entry name" value="Disintegrin_dom_sf"/>
</dbReference>
<dbReference type="InterPro" id="IPR024079">
    <property type="entry name" value="MetalloPept_cat_dom_sf"/>
</dbReference>
<dbReference type="InterPro" id="IPR001590">
    <property type="entry name" value="Peptidase_M12B"/>
</dbReference>
<dbReference type="InterPro" id="IPR002870">
    <property type="entry name" value="Peptidase_M12B_N"/>
</dbReference>
<dbReference type="InterPro" id="IPR034027">
    <property type="entry name" value="Reprolysin_adamalysin"/>
</dbReference>
<dbReference type="PANTHER" id="PTHR11905">
    <property type="entry name" value="ADAM A DISINTEGRIN AND METALLOPROTEASE DOMAIN"/>
    <property type="match status" value="1"/>
</dbReference>
<dbReference type="PANTHER" id="PTHR11905:SF32">
    <property type="entry name" value="DISINTEGRIN AND METALLOPROTEINASE DOMAIN-CONTAINING PROTEIN 28"/>
    <property type="match status" value="1"/>
</dbReference>
<dbReference type="Pfam" id="PF00200">
    <property type="entry name" value="Disintegrin"/>
    <property type="match status" value="1"/>
</dbReference>
<dbReference type="Pfam" id="PF01562">
    <property type="entry name" value="Pep_M12B_propep"/>
    <property type="match status" value="1"/>
</dbReference>
<dbReference type="Pfam" id="PF01421">
    <property type="entry name" value="Reprolysin"/>
    <property type="match status" value="1"/>
</dbReference>
<dbReference type="PRINTS" id="PR00289">
    <property type="entry name" value="DISINTEGRIN"/>
</dbReference>
<dbReference type="SMART" id="SM00050">
    <property type="entry name" value="DISIN"/>
    <property type="match status" value="1"/>
</dbReference>
<dbReference type="SUPFAM" id="SSF57552">
    <property type="entry name" value="Blood coagulation inhibitor (disintegrin)"/>
    <property type="match status" value="1"/>
</dbReference>
<dbReference type="SUPFAM" id="SSF55486">
    <property type="entry name" value="Metalloproteases ('zincins'), catalytic domain"/>
    <property type="match status" value="1"/>
</dbReference>
<dbReference type="PROSITE" id="PS50215">
    <property type="entry name" value="ADAM_MEPRO"/>
    <property type="match status" value="1"/>
</dbReference>
<dbReference type="PROSITE" id="PS00427">
    <property type="entry name" value="DISINTEGRIN_1"/>
    <property type="match status" value="1"/>
</dbReference>
<dbReference type="PROSITE" id="PS50214">
    <property type="entry name" value="DISINTEGRIN_2"/>
    <property type="match status" value="1"/>
</dbReference>
<dbReference type="PROSITE" id="PS00142">
    <property type="entry name" value="ZINC_PROTEASE"/>
    <property type="match status" value="1"/>
</dbReference>
<comment type="function">
    <molecule>Snake venom metalloproteinase</molecule>
    <text evidence="1">Impairs hemostasis in the envenomed animal.</text>
</comment>
<comment type="function">
    <molecule>Disintegrin halystatin</molecule>
    <text evidence="6">Inhibits platelet aggregation and bone resorption.</text>
</comment>
<comment type="cofactor">
    <cofactor evidence="1">
        <name>Zn(2+)</name>
        <dbReference type="ChEBI" id="CHEBI:29105"/>
    </cofactor>
    <text evidence="1">Binds 1 zinc ion per subunit.</text>
</comment>
<comment type="subunit">
    <text evidence="1">Monomer.</text>
</comment>
<comment type="subcellular location">
    <subcellularLocation>
        <location evidence="1">Secreted</location>
    </subcellularLocation>
</comment>
<comment type="tissue specificity">
    <text>Expressed by the venom gland.</text>
</comment>
<comment type="miscellaneous">
    <text>The disintegrin belongs to the medium disintegrin subfamily.</text>
</comment>
<comment type="similarity">
    <text evidence="7">Belongs to the venom metalloproteinase (M12B) family. P-II subfamily. P-IIa sub-subfamily.</text>
</comment>
<comment type="caution">
    <text evidence="7">The disintegrin is also encoded by another precursor (AC Q1PBD1).</text>
</comment>
<protein>
    <recommendedName>
        <fullName>Zinc metalloproteinase/disintegrin</fullName>
    </recommendedName>
    <component>
        <recommendedName>
            <fullName>Snake venom metalloproteinase</fullName>
            <shortName>SVMP</shortName>
            <ecNumber>3.4.24.-</ecNumber>
        </recommendedName>
    </component>
    <component>
        <recommendedName>
            <fullName>Disintegrin halystatin</fullName>
        </recommendedName>
        <alternativeName>
            <fullName>Disintegrin adinbitor</fullName>
        </alternativeName>
        <alternativeName>
            <fullName>Disintegrin brevicaudin-1b</fullName>
        </alternativeName>
    </component>
</protein>
<proteinExistence type="evidence at transcript level"/>
<accession>Q90220</accession>
<reference key="1">
    <citation type="journal article" date="1994" name="Takeda Kenkyusho Ho">
        <title>Halystatin, a novel disintegrin from agkistrodon halys, is a potent inhibitor of bone resorption and platelet aggregation.</title>
        <authorList>
            <person name="Fujisawa Y."/>
            <person name="Kuroda S."/>
            <person name="Notoya K."/>
            <person name="Konishi H."/>
            <person name="Terashita Z."/>
        </authorList>
    </citation>
    <scope>NUCLEOTIDE SEQUENCE [MRNA]</scope>
    <scope>FUNCTION</scope>
    <source>
        <tissue>Venom gland</tissue>
    </source>
</reference>
<feature type="signal peptide" evidence="3">
    <location>
        <begin position="1"/>
        <end position="20"/>
    </location>
</feature>
<feature type="propeptide" id="PRO_0000424450" evidence="1">
    <location>
        <begin position="21"/>
        <end position="190"/>
    </location>
</feature>
<feature type="chain" id="PRO_5000139751" description="Snake venom metalloproteinase">
    <location>
        <begin position="191"/>
        <end position="407"/>
    </location>
</feature>
<feature type="chain" id="PRO_5000139752" description="Disintegrin halystatin">
    <location>
        <begin position="408"/>
        <end position="480"/>
    </location>
</feature>
<feature type="domain" description="Peptidase M12B" evidence="5">
    <location>
        <begin position="197"/>
        <end position="391"/>
    </location>
</feature>
<feature type="domain" description="Disintegrin" evidence="4">
    <location>
        <begin position="399"/>
        <end position="480"/>
    </location>
</feature>
<feature type="short sequence motif" description="Cell attachment site">
    <location>
        <begin position="458"/>
        <end position="460"/>
    </location>
</feature>
<feature type="active site" evidence="5">
    <location>
        <position position="334"/>
    </location>
</feature>
<feature type="binding site" evidence="1">
    <location>
        <position position="333"/>
    </location>
    <ligand>
        <name>Zn(2+)</name>
        <dbReference type="ChEBI" id="CHEBI:29105"/>
        <note>catalytic</note>
    </ligand>
</feature>
<feature type="binding site" evidence="1">
    <location>
        <position position="337"/>
    </location>
    <ligand>
        <name>Zn(2+)</name>
        <dbReference type="ChEBI" id="CHEBI:29105"/>
        <note>catalytic</note>
    </ligand>
</feature>
<feature type="binding site" evidence="1">
    <location>
        <position position="343"/>
    </location>
    <ligand>
        <name>Zn(2+)</name>
        <dbReference type="ChEBI" id="CHEBI:29105"/>
        <note>catalytic</note>
    </ligand>
</feature>
<feature type="glycosylation site" description="N-linked (GlcNAc...) asparagine" evidence="3">
    <location>
        <position position="259"/>
    </location>
</feature>
<feature type="glycosylation site" description="N-linked (GlcNAc...) asparagine" evidence="3">
    <location>
        <position position="279"/>
    </location>
</feature>
<feature type="disulfide bond" evidence="5">
    <location>
        <begin position="308"/>
        <end position="386"/>
    </location>
</feature>
<feature type="disulfide bond" evidence="5">
    <location>
        <begin position="348"/>
        <end position="370"/>
    </location>
</feature>
<feature type="disulfide bond" evidence="5">
    <location>
        <begin position="350"/>
        <end position="353"/>
    </location>
</feature>
<feature type="disulfide bond" evidence="2">
    <location>
        <begin position="413"/>
        <end position="428"/>
    </location>
</feature>
<feature type="disulfide bond" evidence="2">
    <location>
        <begin position="415"/>
        <end position="423"/>
    </location>
</feature>
<feature type="disulfide bond" evidence="2">
    <location>
        <begin position="422"/>
        <end position="445"/>
    </location>
</feature>
<feature type="disulfide bond" evidence="2">
    <location>
        <begin position="436"/>
        <end position="442"/>
    </location>
</feature>
<feature type="disulfide bond" evidence="2">
    <location>
        <begin position="441"/>
        <end position="466"/>
    </location>
</feature>
<feature type="disulfide bond" evidence="2 4">
    <location>
        <begin position="454"/>
        <end position="473"/>
    </location>
</feature>
<organism>
    <name type="scientific">Gloydius halys</name>
    <name type="common">Chinese water mocassin</name>
    <name type="synonym">Agkistrodon halys</name>
    <dbReference type="NCBI Taxonomy" id="8714"/>
    <lineage>
        <taxon>Eukaryota</taxon>
        <taxon>Metazoa</taxon>
        <taxon>Chordata</taxon>
        <taxon>Craniata</taxon>
        <taxon>Vertebrata</taxon>
        <taxon>Euteleostomi</taxon>
        <taxon>Lepidosauria</taxon>
        <taxon>Squamata</taxon>
        <taxon>Bifurcata</taxon>
        <taxon>Unidentata</taxon>
        <taxon>Episquamata</taxon>
        <taxon>Toxicofera</taxon>
        <taxon>Serpentes</taxon>
        <taxon>Colubroidea</taxon>
        <taxon>Viperidae</taxon>
        <taxon>Crotalinae</taxon>
        <taxon>Gloydius</taxon>
    </lineage>
</organism>
<sequence length="480" mass="53620">MIQVLLITICLAVFPFQGSSIVLDSGNLNEFEVVYPEKVTALPRAAVKNKYEDAMQYEFKVNGEPLLLHLERNKGLFSDDYSEIHYSPDAREISAYPSVEDHCFYHGRVENDADSTASLSACDGLKAHFKIQGEMYLIEPLEVSDTDAHAVFKYENVEKEDEPPKMCGVTQNWESYESTKKASQLNVSPDQQRFPQRFIKLAIYVDHGMYTKYAGNSERITKRVHQMINNINMMCRALNIVTSLSVLRIWSEKDLITVNASAPSSLTLFGAWRETVLLNRTSHDHAQLMTATIFNGNVIGRAPVGGMCDPKRSVAIVRDHNAILFIVAVTMTHEMGHNLGMHHDEDKCNCNTCIMSKVLSRQPSYEFSDCNENEYQTYVTDHSPQCILNDPLRPDTVSTPVSGNELLEAGEECDCGSPGNPCCDAATCKLRQGAQCAEGLCCDQCRFMKKGTVCRIARGDDMDDYCNGISAGCPRNPFHA</sequence>
<keyword id="KW-1217">Cell adhesion impairing toxin</keyword>
<keyword id="KW-1015">Disulfide bond</keyword>
<keyword id="KW-0325">Glycoprotein</keyword>
<keyword id="KW-1199">Hemostasis impairing toxin</keyword>
<keyword id="KW-0378">Hydrolase</keyword>
<keyword id="KW-0479">Metal-binding</keyword>
<keyword id="KW-0482">Metalloprotease</keyword>
<keyword id="KW-1201">Platelet aggregation inhibiting toxin</keyword>
<keyword id="KW-0645">Protease</keyword>
<keyword id="KW-0964">Secreted</keyword>
<keyword id="KW-0732">Signal</keyword>
<keyword id="KW-0800">Toxin</keyword>
<keyword id="KW-0862">Zinc</keyword>
<keyword id="KW-0865">Zymogen</keyword>
<name>VM2H1_GLOHA</name>
<evidence type="ECO:0000250" key="1"/>
<evidence type="ECO:0000250" key="2">
    <source>
        <dbReference type="UniProtKB" id="Q0NZX5"/>
    </source>
</evidence>
<evidence type="ECO:0000255" key="3"/>
<evidence type="ECO:0000255" key="4">
    <source>
        <dbReference type="PROSITE-ProRule" id="PRU00068"/>
    </source>
</evidence>
<evidence type="ECO:0000255" key="5">
    <source>
        <dbReference type="PROSITE-ProRule" id="PRU00276"/>
    </source>
</evidence>
<evidence type="ECO:0000269" key="6">
    <source ref="1"/>
</evidence>
<evidence type="ECO:0000305" key="7"/>